<evidence type="ECO:0000250" key="1"/>
<evidence type="ECO:0000305" key="2"/>
<reference key="1">
    <citation type="journal article" date="2001" name="Nature">
        <title>Genome sequence of enterohaemorrhagic Escherichia coli O157:H7.</title>
        <authorList>
            <person name="Perna N.T."/>
            <person name="Plunkett G. III"/>
            <person name="Burland V."/>
            <person name="Mau B."/>
            <person name="Glasner J.D."/>
            <person name="Rose D.J."/>
            <person name="Mayhew G.F."/>
            <person name="Evans P.S."/>
            <person name="Gregor J."/>
            <person name="Kirkpatrick H.A."/>
            <person name="Posfai G."/>
            <person name="Hackett J."/>
            <person name="Klink S."/>
            <person name="Boutin A."/>
            <person name="Shao Y."/>
            <person name="Miller L."/>
            <person name="Grotbeck E.J."/>
            <person name="Davis N.W."/>
            <person name="Lim A."/>
            <person name="Dimalanta E.T."/>
            <person name="Potamousis K."/>
            <person name="Apodaca J."/>
            <person name="Anantharaman T.S."/>
            <person name="Lin J."/>
            <person name="Yen G."/>
            <person name="Schwartz D.C."/>
            <person name="Welch R.A."/>
            <person name="Blattner F.R."/>
        </authorList>
    </citation>
    <scope>NUCLEOTIDE SEQUENCE [LARGE SCALE GENOMIC DNA]</scope>
    <source>
        <strain>O157:H7 / EDL933 / ATCC 700927 / EHEC</strain>
    </source>
</reference>
<reference key="2">
    <citation type="journal article" date="2001" name="DNA Res.">
        <title>Complete genome sequence of enterohemorrhagic Escherichia coli O157:H7 and genomic comparison with a laboratory strain K-12.</title>
        <authorList>
            <person name="Hayashi T."/>
            <person name="Makino K."/>
            <person name="Ohnishi M."/>
            <person name="Kurokawa K."/>
            <person name="Ishii K."/>
            <person name="Yokoyama K."/>
            <person name="Han C.-G."/>
            <person name="Ohtsubo E."/>
            <person name="Nakayama K."/>
            <person name="Murata T."/>
            <person name="Tanaka M."/>
            <person name="Tobe T."/>
            <person name="Iida T."/>
            <person name="Takami H."/>
            <person name="Honda T."/>
            <person name="Sasakawa C."/>
            <person name="Ogasawara N."/>
            <person name="Yasunaga T."/>
            <person name="Kuhara S."/>
            <person name="Shiba T."/>
            <person name="Hattori M."/>
            <person name="Shinagawa H."/>
        </authorList>
    </citation>
    <scope>NUCLEOTIDE SEQUENCE [LARGE SCALE GENOMIC DNA]</scope>
    <source>
        <strain>O157:H7 / Sakai / RIMD 0509952 / EHEC</strain>
    </source>
</reference>
<feature type="chain" id="PRO_0000093998" description="ECF RNA polymerase sigma-E factor">
    <location>
        <begin position="1"/>
        <end position="191"/>
    </location>
</feature>
<feature type="DNA-binding region" description="H-T-H motif" evidence="1">
    <location>
        <begin position="156"/>
        <end position="175"/>
    </location>
</feature>
<feature type="region of interest" description="Binds RNAP core" evidence="1">
    <location>
        <begin position="1"/>
        <end position="153"/>
    </location>
</feature>
<feature type="region of interest" description="Sigma-70 factor domain-2" evidence="1">
    <location>
        <begin position="25"/>
        <end position="92"/>
    </location>
</feature>
<feature type="region of interest" description="Sigma-70 factor domain-4" evidence="1">
    <location>
        <begin position="129"/>
        <end position="180"/>
    </location>
</feature>
<feature type="short sequence motif" description="Polymerase core binding" evidence="1">
    <location>
        <begin position="48"/>
        <end position="61"/>
    </location>
</feature>
<keyword id="KW-0963">Cytoplasm</keyword>
<keyword id="KW-0238">DNA-binding</keyword>
<keyword id="KW-1185">Reference proteome</keyword>
<keyword id="KW-0731">Sigma factor</keyword>
<keyword id="KW-0346">Stress response</keyword>
<keyword id="KW-0804">Transcription</keyword>
<keyword id="KW-0805">Transcription regulation</keyword>
<proteinExistence type="inferred from homology"/>
<organism>
    <name type="scientific">Escherichia coli O157:H7</name>
    <dbReference type="NCBI Taxonomy" id="83334"/>
    <lineage>
        <taxon>Bacteria</taxon>
        <taxon>Pseudomonadati</taxon>
        <taxon>Pseudomonadota</taxon>
        <taxon>Gammaproteobacteria</taxon>
        <taxon>Enterobacterales</taxon>
        <taxon>Enterobacteriaceae</taxon>
        <taxon>Escherichia</taxon>
    </lineage>
</organism>
<name>RPOE_ECO57</name>
<accession>P0AGB8</accession>
<accession>P34086</accession>
<protein>
    <recommendedName>
        <fullName>ECF RNA polymerase sigma-E factor</fullName>
    </recommendedName>
    <alternativeName>
        <fullName>RNA polymerase sigma-E factor</fullName>
    </alternativeName>
    <alternativeName>
        <fullName>Sigma-24</fullName>
    </alternativeName>
</protein>
<sequence>MSEQLTDQVLVERVQKGDQKAFNLLVVRYQHKVASLVSRYVPSGDVPDVVQEAFIKAYRALDSFRGDSAFYTWLYRIAVNTAKNYLVAQGRRPPSSDVDAIEAENFESGGALKEISNPENLMLSEELRQIVFRTIESLPEDLRMAITLRELDGLSYEEIAAIMDCPVGTVRSRIFRAREAIDNKVQPLIRR</sequence>
<gene>
    <name type="primary">rpoE</name>
    <name type="ordered locus">Z3855</name>
    <name type="ordered locus">ECs3439</name>
</gene>
<comment type="function">
    <text evidence="1">Sigma factors are initiation factors that promote the attachment of RNA polymerase (RNAP) to specific initiation sites and are then released. Extracytoplasmic function (ECF) sigma-E controls the envelope stress response, responding to periplasmic protein stress, increased levels of periplasmic lipopolysaccharide (LPS) as well as heat shock and oxidative stress; it controls protein processing in the extracytoplasmic compartment (By similarity).</text>
</comment>
<comment type="activity regulation">
    <text evidence="1">ECF sigma-E is held in an inactive form by its cognate anti-sigma factor (RseA) until released by regulated intramembrane proteolysis (RIP). RIP occurs when an extracytoplasmic signal (periplasmic stress and excess LPS) triggers a concerted proteolytic cascade to transmit information and elicit cellular responses. The anti-sigma factor RseA is an inner membrane protein, binding sigma-E in the cytoplasm and RseB in the periplasm. RseA is first cut extracytoplasmically (site-1 protease, S1P, by DegS), then within the membrane itself (site-2 protease, S2P, by RseP), while cytoplasmic proteases (predominantly ClpX-ClpP) finish degrading the regulatory protein, liberating sigma-E. Degradation of RseA requires 2 signals to activate DegS; an outer membrane protein (OMP) signal activates DegS, while an LPS signal causes release of RseB from RseA, freeing RseA to be cleaved (By similarity).</text>
</comment>
<comment type="subunit">
    <text evidence="1">Interacts transiently with the RNAP catalytic core formed by RpoA, RpoB, RpoC and RpoZ (2 alpha, 1 beta, 1 beta' and 1 omega subunit) to form the RNAP holoenzyme that can initiate transcription. Interacts 1:1 with anti-sigma-E factor RseA which prevents binding to RNAP catalytic core (By similarity).</text>
</comment>
<comment type="subcellular location">
    <subcellularLocation>
        <location evidence="1">Cytoplasm</location>
    </subcellularLocation>
    <text evidence="1">Associates with the inner membrane via RseA.</text>
</comment>
<comment type="domain">
    <text evidence="1">The sigma-70 factor domain-2 mediates sequence-specific interaction with the -10 element in promoter DNA, and plays an important role in melting the double-stranded DNA and the formation of the transcription bubble. The sigma-70 factor domain-2 mediates interaction with the RNA polymerase subunits RpoB and RpoC (By similarity).</text>
</comment>
<comment type="domain">
    <text evidence="1">The sigma-70 factor domain-4 contains a helix-turn-helix (H-T-H) motif that mediates interaction with the -35 element in promoter DNA. The domain also mediates interaction with the RNA polymerase subunit RpoA. Interactions between sigma-70 factor domain-4 and anti-sigma factors prevents interaction of sigma factors with the RNA polymerase catalytic core (By similarity).</text>
</comment>
<comment type="similarity">
    <text evidence="2">Belongs to the sigma-70 factor family. ECF subfamily.</text>
</comment>
<dbReference type="EMBL" id="AE005174">
    <property type="protein sequence ID" value="AAG57689.1"/>
    <property type="molecule type" value="Genomic_DNA"/>
</dbReference>
<dbReference type="EMBL" id="BA000007">
    <property type="protein sequence ID" value="BAB36862.1"/>
    <property type="molecule type" value="Genomic_DNA"/>
</dbReference>
<dbReference type="PIR" id="E85903">
    <property type="entry name" value="E85903"/>
</dbReference>
<dbReference type="PIR" id="G91058">
    <property type="entry name" value="G91058"/>
</dbReference>
<dbReference type="RefSeq" id="NP_311466.1">
    <property type="nucleotide sequence ID" value="NC_002695.1"/>
</dbReference>
<dbReference type="RefSeq" id="WP_001295364.1">
    <property type="nucleotide sequence ID" value="NZ_VOAI01000001.1"/>
</dbReference>
<dbReference type="SMR" id="P0AGB8"/>
<dbReference type="STRING" id="155864.Z3855"/>
<dbReference type="GeneID" id="914887"/>
<dbReference type="GeneID" id="93774518"/>
<dbReference type="KEGG" id="ece:Z3855"/>
<dbReference type="KEGG" id="ecs:ECs_3439"/>
<dbReference type="PATRIC" id="fig|386585.9.peg.3593"/>
<dbReference type="eggNOG" id="COG1595">
    <property type="taxonomic scope" value="Bacteria"/>
</dbReference>
<dbReference type="HOGENOM" id="CLU_047691_3_0_6"/>
<dbReference type="OMA" id="QFYTWLY"/>
<dbReference type="Proteomes" id="UP000000558">
    <property type="component" value="Chromosome"/>
</dbReference>
<dbReference type="Proteomes" id="UP000002519">
    <property type="component" value="Chromosome"/>
</dbReference>
<dbReference type="GO" id="GO:0005737">
    <property type="term" value="C:cytoplasm"/>
    <property type="evidence" value="ECO:0007669"/>
    <property type="project" value="UniProtKB-SubCell"/>
</dbReference>
<dbReference type="GO" id="GO:0003677">
    <property type="term" value="F:DNA binding"/>
    <property type="evidence" value="ECO:0007669"/>
    <property type="project" value="UniProtKB-KW"/>
</dbReference>
<dbReference type="GO" id="GO:0016987">
    <property type="term" value="F:sigma factor activity"/>
    <property type="evidence" value="ECO:0007669"/>
    <property type="project" value="UniProtKB-KW"/>
</dbReference>
<dbReference type="GO" id="GO:0006352">
    <property type="term" value="P:DNA-templated transcription initiation"/>
    <property type="evidence" value="ECO:0007669"/>
    <property type="project" value="InterPro"/>
</dbReference>
<dbReference type="CDD" id="cd06171">
    <property type="entry name" value="Sigma70_r4"/>
    <property type="match status" value="1"/>
</dbReference>
<dbReference type="FunFam" id="1.10.10.10:FF:000043">
    <property type="entry name" value="RNA polymerase sigma factor"/>
    <property type="match status" value="1"/>
</dbReference>
<dbReference type="FunFam" id="1.10.1740.10:FF:000001">
    <property type="entry name" value="RNA polymerase sigma factor"/>
    <property type="match status" value="1"/>
</dbReference>
<dbReference type="Gene3D" id="1.10.1740.10">
    <property type="match status" value="1"/>
</dbReference>
<dbReference type="Gene3D" id="1.10.10.10">
    <property type="entry name" value="Winged helix-like DNA-binding domain superfamily/Winged helix DNA-binding domain"/>
    <property type="match status" value="1"/>
</dbReference>
<dbReference type="InterPro" id="IPR039425">
    <property type="entry name" value="RNA_pol_sigma-70-like"/>
</dbReference>
<dbReference type="InterPro" id="IPR014284">
    <property type="entry name" value="RNA_pol_sigma-70_dom"/>
</dbReference>
<dbReference type="InterPro" id="IPR000838">
    <property type="entry name" value="RNA_pol_sigma70_ECF_CS"/>
</dbReference>
<dbReference type="InterPro" id="IPR007627">
    <property type="entry name" value="RNA_pol_sigma70_r2"/>
</dbReference>
<dbReference type="InterPro" id="IPR013249">
    <property type="entry name" value="RNA_pol_sigma70_r4_t2"/>
</dbReference>
<dbReference type="InterPro" id="IPR014286">
    <property type="entry name" value="RNA_pol_sigma70_RpoE"/>
</dbReference>
<dbReference type="InterPro" id="IPR013325">
    <property type="entry name" value="RNA_pol_sigma_r2"/>
</dbReference>
<dbReference type="InterPro" id="IPR013324">
    <property type="entry name" value="RNA_pol_sigma_r3/r4-like"/>
</dbReference>
<dbReference type="InterPro" id="IPR036388">
    <property type="entry name" value="WH-like_DNA-bd_sf"/>
</dbReference>
<dbReference type="NCBIfam" id="TIGR02939">
    <property type="entry name" value="RpoE_Sigma70"/>
    <property type="match status" value="1"/>
</dbReference>
<dbReference type="NCBIfam" id="TIGR02937">
    <property type="entry name" value="sigma70-ECF"/>
    <property type="match status" value="1"/>
</dbReference>
<dbReference type="PANTHER" id="PTHR43133:SF53">
    <property type="entry name" value="ECF RNA POLYMERASE SIGMA-E FACTOR"/>
    <property type="match status" value="1"/>
</dbReference>
<dbReference type="PANTHER" id="PTHR43133">
    <property type="entry name" value="RNA POLYMERASE ECF-TYPE SIGMA FACTO"/>
    <property type="match status" value="1"/>
</dbReference>
<dbReference type="Pfam" id="PF04542">
    <property type="entry name" value="Sigma70_r2"/>
    <property type="match status" value="1"/>
</dbReference>
<dbReference type="Pfam" id="PF08281">
    <property type="entry name" value="Sigma70_r4_2"/>
    <property type="match status" value="1"/>
</dbReference>
<dbReference type="SUPFAM" id="SSF88946">
    <property type="entry name" value="Sigma2 domain of RNA polymerase sigma factors"/>
    <property type="match status" value="1"/>
</dbReference>
<dbReference type="SUPFAM" id="SSF88659">
    <property type="entry name" value="Sigma3 and sigma4 domains of RNA polymerase sigma factors"/>
    <property type="match status" value="1"/>
</dbReference>
<dbReference type="PROSITE" id="PS01063">
    <property type="entry name" value="SIGMA70_ECF"/>
    <property type="match status" value="1"/>
</dbReference>